<dbReference type="EMBL" id="L22858">
    <property type="protein sequence ID" value="AAA66658.1"/>
    <property type="molecule type" value="Genomic_DNA"/>
</dbReference>
<dbReference type="EMBL" id="M96361">
    <property type="protein sequence ID" value="AAA66797.1"/>
    <property type="molecule type" value="Genomic_DNA"/>
</dbReference>
<dbReference type="PIR" id="D72853">
    <property type="entry name" value="D72853"/>
</dbReference>
<dbReference type="RefSeq" id="NP_054057.1">
    <property type="nucleotide sequence ID" value="NC_001623.1"/>
</dbReference>
<dbReference type="SMR" id="P41432"/>
<dbReference type="GeneID" id="1403860"/>
<dbReference type="KEGG" id="vg:1403860"/>
<dbReference type="OrthoDB" id="14881at10239"/>
<dbReference type="Proteomes" id="UP000008292">
    <property type="component" value="Segment"/>
</dbReference>
<name>Y028_NPVAC</name>
<proteinExistence type="predicted"/>
<protein>
    <recommendedName>
        <fullName>Uncharacterized 20.4 kDa protein in IAP1-SOD intergenic region</fullName>
    </recommendedName>
    <alternativeName>
        <fullName>ORF14</fullName>
    </alternativeName>
</protein>
<organism>
    <name type="scientific">Autographa californica nuclear polyhedrosis virus</name>
    <name type="common">AcMNPV</name>
    <dbReference type="NCBI Taxonomy" id="46015"/>
    <lineage>
        <taxon>Viruses</taxon>
        <taxon>Viruses incertae sedis</taxon>
        <taxon>Naldaviricetes</taxon>
        <taxon>Lefavirales</taxon>
        <taxon>Baculoviridae</taxon>
        <taxon>Alphabaculovirus</taxon>
        <taxon>Alphabaculovirus aucalifornicae</taxon>
    </lineage>
</organism>
<keyword id="KW-1185">Reference proteome</keyword>
<reference key="1">
    <citation type="journal article" date="1994" name="Virology">
        <title>The complete DNA sequence of Autographa californica nuclear polyhedrosis virus.</title>
        <authorList>
            <person name="Ayres M.D."/>
            <person name="Howard S.C."/>
            <person name="Kuzio J."/>
            <person name="Lopez-Ferber M."/>
            <person name="Possee R.D."/>
        </authorList>
    </citation>
    <scope>NUCLEOTIDE SEQUENCE [LARGE SCALE GENOMIC DNA]</scope>
    <source>
        <strain>C6</strain>
    </source>
</reference>
<reference key="2">
    <citation type="journal article" date="1992" name="Virology">
        <title>Sequence, genomic organization of the EcoRI-A fragment of Autographa californica nuclear polyhedrosis virus, and identification of a viral-encoded protein resembling the outer capsid protein VP8 of rotavirus.</title>
        <authorList>
            <person name="Braunagel S.C."/>
            <person name="Daniel K.D."/>
            <person name="Reilly L.M."/>
            <person name="Guarino L.A."/>
            <person name="Hong T."/>
            <person name="Summers M.D."/>
        </authorList>
    </citation>
    <scope>NUCLEOTIDE SEQUENCE [GENOMIC DNA]</scope>
    <source>
        <strain>E2</strain>
    </source>
</reference>
<sequence>MVFNVYYNGYYVEKKFSKEFLIHIAPDLKNSVDWNGSTRKQLRVLDKRAYRQVLHCNGRYYWPDGTKFVSHPYNKSIRTHSATVKRTDSSHRLKSHVVDKRPRRSLDSPRLDGYVLASSPIPHSDWNEELKLYAQSHGYDDYDDNLEDGEIDERDSLKSLNNHLDDLNVLEKQ</sequence>
<feature type="chain" id="PRO_0000132966" description="Uncharacterized 20.4 kDa protein in IAP1-SOD intergenic region">
    <location>
        <begin position="1"/>
        <end position="173"/>
    </location>
</feature>
<feature type="region of interest" description="Disordered" evidence="1">
    <location>
        <begin position="80"/>
        <end position="107"/>
    </location>
</feature>
<feature type="compositionally biased region" description="Basic and acidic residues" evidence="1">
    <location>
        <begin position="85"/>
        <end position="107"/>
    </location>
</feature>
<feature type="sequence conflict" description="In Ref. 2; AAA66797." evidence="2" ref="2">
    <original>NVLEKQ</original>
    <variation>KY</variation>
    <location>
        <begin position="168"/>
        <end position="173"/>
    </location>
</feature>
<accession>P41432</accession>
<evidence type="ECO:0000256" key="1">
    <source>
        <dbReference type="SAM" id="MobiDB-lite"/>
    </source>
</evidence>
<evidence type="ECO:0000305" key="2"/>
<organismHost>
    <name type="scientific">Lepidoptera</name>
    <name type="common">butterflies and moths</name>
    <dbReference type="NCBI Taxonomy" id="7088"/>
</organismHost>